<feature type="chain" id="PRO_0000330154" description="NADH-cytochrome b5 reductase 1">
    <location>
        <begin position="1"/>
        <end position="281"/>
    </location>
</feature>
<feature type="transmembrane region" description="Helical" evidence="3">
    <location>
        <begin position="2"/>
        <end position="22"/>
    </location>
</feature>
<feature type="domain" description="FAD-binding FR-type" evidence="4">
    <location>
        <begin position="37"/>
        <end position="141"/>
    </location>
</feature>
<feature type="binding site" evidence="1">
    <location>
        <begin position="121"/>
        <end position="136"/>
    </location>
    <ligand>
        <name>FAD</name>
        <dbReference type="ChEBI" id="CHEBI:57692"/>
    </ligand>
</feature>
<feature type="binding site" evidence="1">
    <location>
        <begin position="147"/>
        <end position="179"/>
    </location>
    <ligand>
        <name>FAD</name>
        <dbReference type="ChEBI" id="CHEBI:57692"/>
    </ligand>
</feature>
<sequence>MVPGKFIFTATFVLLCTIIAVVLEYQSKKDKPVLDKEKLQEFPLVAKTVLTHNTAIYRFGLPKSTQVLGLPIGQHISVQANINGKDILRSYTPTSLDSDAVGHFELLIKSYEKGNISKHFAQLNIGDKIKVRGPKGFYHYQPNMNEEIGMIAGGTGIAPMYQIMKSIFANDSDKTKVSLVYGNQTEEDILLKKELDAFVERKPDQFKVYYLLDKAPEAWTGGVGYITVDTMKERLPAPAEGVQLLVCGPPPMVSSIKRNAVTLGYEKAKPISKMGDQIFVF</sequence>
<organism>
    <name type="scientific">Kluyveromyces lactis (strain ATCC 8585 / CBS 2359 / DSM 70799 / NBRC 1267 / NRRL Y-1140 / WM37)</name>
    <name type="common">Yeast</name>
    <name type="synonym">Candida sphaerica</name>
    <dbReference type="NCBI Taxonomy" id="284590"/>
    <lineage>
        <taxon>Eukaryota</taxon>
        <taxon>Fungi</taxon>
        <taxon>Dikarya</taxon>
        <taxon>Ascomycota</taxon>
        <taxon>Saccharomycotina</taxon>
        <taxon>Saccharomycetes</taxon>
        <taxon>Saccharomycetales</taxon>
        <taxon>Saccharomycetaceae</taxon>
        <taxon>Kluyveromyces</taxon>
    </lineage>
</organism>
<comment type="function">
    <text evidence="2">NADH-dependent reductase for DPH3 and cytochrome b5. Required for the first step of diphthamide biosynthesis, a post-translational modification of histidine which occurs in elongation factor 2. DPH1 and DPH2 transfer a 3-amino-3-carboxypropyl (ACP) group from S-adenosyl-L-methionine (SAM) to a histidine residue, the reaction is assisted by a reduction system comprising DPH3 and a NADH-dependent reductase, predominantly CBR1. By reducing DPH3, also involved in the formation of the tRNA wobble base modification mcm5s 2U (5-methoxycarbonylmethyl-2-thiouridine), mediated by the elongator complex. The cytochrome b5/NADH cytochrome b5 reductase electron transfer system supports the catalytic activity of several sterol biosynthetic enzymes.</text>
</comment>
<comment type="catalytic activity">
    <reaction evidence="2">
        <text>2 Fe(III)-[cytochrome b5] + NADH = 2 Fe(II)-[cytochrome b5] + NAD(+) + H(+)</text>
        <dbReference type="Rhea" id="RHEA:46680"/>
        <dbReference type="Rhea" id="RHEA-COMP:10438"/>
        <dbReference type="Rhea" id="RHEA-COMP:10439"/>
        <dbReference type="ChEBI" id="CHEBI:15378"/>
        <dbReference type="ChEBI" id="CHEBI:29033"/>
        <dbReference type="ChEBI" id="CHEBI:29034"/>
        <dbReference type="ChEBI" id="CHEBI:57540"/>
        <dbReference type="ChEBI" id="CHEBI:57945"/>
        <dbReference type="EC" id="1.6.2.2"/>
    </reaction>
</comment>
<comment type="catalytic activity">
    <reaction evidence="2">
        <text>2 Fe(3+)-[Dph3] + NADH = 2 Fe(2+)-[Dph3] + NAD(+) + H(+)</text>
        <dbReference type="Rhea" id="RHEA:71231"/>
        <dbReference type="Rhea" id="RHEA-COMP:18002"/>
        <dbReference type="Rhea" id="RHEA-COMP:18003"/>
        <dbReference type="ChEBI" id="CHEBI:15378"/>
        <dbReference type="ChEBI" id="CHEBI:29033"/>
        <dbReference type="ChEBI" id="CHEBI:29034"/>
        <dbReference type="ChEBI" id="CHEBI:57540"/>
        <dbReference type="ChEBI" id="CHEBI:57945"/>
        <dbReference type="ChEBI" id="CHEBI:83228"/>
    </reaction>
    <physiologicalReaction direction="left-to-right" evidence="2">
        <dbReference type="Rhea" id="RHEA:71232"/>
    </physiologicalReaction>
</comment>
<comment type="cofactor">
    <cofactor evidence="3">
        <name>FAD</name>
        <dbReference type="ChEBI" id="CHEBI:57692"/>
    </cofactor>
</comment>
<comment type="pathway">
    <text evidence="2">Protein modification; peptidyl-diphthamide biosynthesis.</text>
</comment>
<comment type="subunit">
    <text evidence="2">Monomer. Component of the 2-(3-amino-3-carboxypropyl)histidine synthase complex composed of DPH1, DPH2, DPH3 and a NADH-dependent reductase, predominantly CBR1.</text>
</comment>
<comment type="subcellular location">
    <subcellularLocation>
        <location evidence="2">Mitochondrion outer membrane</location>
        <topology evidence="3">Single-pass membrane protein</topology>
    </subcellularLocation>
</comment>
<comment type="similarity">
    <text evidence="5">Belongs to the flavoprotein pyridine nucleotide cytochrome reductase family.</text>
</comment>
<evidence type="ECO:0000250" key="1"/>
<evidence type="ECO:0000250" key="2">
    <source>
        <dbReference type="UniProtKB" id="P38626"/>
    </source>
</evidence>
<evidence type="ECO:0000255" key="3"/>
<evidence type="ECO:0000255" key="4">
    <source>
        <dbReference type="PROSITE-ProRule" id="PRU00716"/>
    </source>
</evidence>
<evidence type="ECO:0000305" key="5"/>
<accession>Q6CID0</accession>
<keyword id="KW-0274">FAD</keyword>
<keyword id="KW-0285">Flavoprotein</keyword>
<keyword id="KW-0472">Membrane</keyword>
<keyword id="KW-0496">Mitochondrion</keyword>
<keyword id="KW-1000">Mitochondrion outer membrane</keyword>
<keyword id="KW-0520">NAD</keyword>
<keyword id="KW-0560">Oxidoreductase</keyword>
<keyword id="KW-1185">Reference proteome</keyword>
<keyword id="KW-0808">Transferase</keyword>
<keyword id="KW-0812">Transmembrane</keyword>
<keyword id="KW-1133">Transmembrane helix</keyword>
<dbReference type="EC" id="1.6.2.2" evidence="2"/>
<dbReference type="EMBL" id="CR382126">
    <property type="protein sequence ID" value="CAG99017.1"/>
    <property type="molecule type" value="Genomic_DNA"/>
</dbReference>
<dbReference type="RefSeq" id="XP_456309.1">
    <property type="nucleotide sequence ID" value="XM_456309.1"/>
</dbReference>
<dbReference type="SMR" id="Q6CID0"/>
<dbReference type="FunCoup" id="Q6CID0">
    <property type="interactions" value="272"/>
</dbReference>
<dbReference type="STRING" id="284590.Q6CID0"/>
<dbReference type="PaxDb" id="284590-Q6CID0"/>
<dbReference type="KEGG" id="kla:KLLA0_F27621g"/>
<dbReference type="eggNOG" id="KOG0534">
    <property type="taxonomic scope" value="Eukaryota"/>
</dbReference>
<dbReference type="HOGENOM" id="CLU_003827_9_0_1"/>
<dbReference type="InParanoid" id="Q6CID0"/>
<dbReference type="OMA" id="VQIFMCG"/>
<dbReference type="UniPathway" id="UPA00559"/>
<dbReference type="Proteomes" id="UP000000598">
    <property type="component" value="Chromosome F"/>
</dbReference>
<dbReference type="GO" id="GO:0005783">
    <property type="term" value="C:endoplasmic reticulum"/>
    <property type="evidence" value="ECO:0007669"/>
    <property type="project" value="TreeGrafter"/>
</dbReference>
<dbReference type="GO" id="GO:0005741">
    <property type="term" value="C:mitochondrial outer membrane"/>
    <property type="evidence" value="ECO:0007669"/>
    <property type="project" value="UniProtKB-SubCell"/>
</dbReference>
<dbReference type="GO" id="GO:0005886">
    <property type="term" value="C:plasma membrane"/>
    <property type="evidence" value="ECO:0007669"/>
    <property type="project" value="TreeGrafter"/>
</dbReference>
<dbReference type="GO" id="GO:0004128">
    <property type="term" value="F:cytochrome-b5 reductase activity, acting on NAD(P)H"/>
    <property type="evidence" value="ECO:0000250"/>
    <property type="project" value="UniProtKB"/>
</dbReference>
<dbReference type="GO" id="GO:0003954">
    <property type="term" value="F:NADH dehydrogenase activity"/>
    <property type="evidence" value="ECO:0000250"/>
    <property type="project" value="UniProtKB"/>
</dbReference>
<dbReference type="GO" id="GO:0016740">
    <property type="term" value="F:transferase activity"/>
    <property type="evidence" value="ECO:0007669"/>
    <property type="project" value="UniProtKB-KW"/>
</dbReference>
<dbReference type="GO" id="GO:0017183">
    <property type="term" value="P:protein histidyl modification to diphthamide"/>
    <property type="evidence" value="ECO:0000250"/>
    <property type="project" value="UniProtKB"/>
</dbReference>
<dbReference type="GO" id="GO:0002926">
    <property type="term" value="P:tRNA wobble base 5-methoxycarbonylmethyl-2-thiouridinylation"/>
    <property type="evidence" value="ECO:0000250"/>
    <property type="project" value="UniProtKB"/>
</dbReference>
<dbReference type="CDD" id="cd06183">
    <property type="entry name" value="cyt_b5_reduct_like"/>
    <property type="match status" value="1"/>
</dbReference>
<dbReference type="FunFam" id="2.40.30.10:FF:000032">
    <property type="entry name" value="NADH-cytochrome b5 reductase"/>
    <property type="match status" value="1"/>
</dbReference>
<dbReference type="FunFam" id="3.40.50.80:FF:000019">
    <property type="entry name" value="NADH-cytochrome b5 reductase"/>
    <property type="match status" value="1"/>
</dbReference>
<dbReference type="Gene3D" id="3.40.50.80">
    <property type="entry name" value="Nucleotide-binding domain of ferredoxin-NADP reductase (FNR) module"/>
    <property type="match status" value="1"/>
</dbReference>
<dbReference type="Gene3D" id="2.40.30.10">
    <property type="entry name" value="Translation factors"/>
    <property type="match status" value="1"/>
</dbReference>
<dbReference type="InterPro" id="IPR001834">
    <property type="entry name" value="CBR-like"/>
</dbReference>
<dbReference type="InterPro" id="IPR008333">
    <property type="entry name" value="Cbr1-like_FAD-bd_dom"/>
</dbReference>
<dbReference type="InterPro" id="IPR017927">
    <property type="entry name" value="FAD-bd_FR_type"/>
</dbReference>
<dbReference type="InterPro" id="IPR001709">
    <property type="entry name" value="Flavoprot_Pyr_Nucl_cyt_Rdtase"/>
</dbReference>
<dbReference type="InterPro" id="IPR039261">
    <property type="entry name" value="FNR_nucleotide-bd"/>
</dbReference>
<dbReference type="InterPro" id="IPR001433">
    <property type="entry name" value="OxRdtase_FAD/NAD-bd"/>
</dbReference>
<dbReference type="InterPro" id="IPR017938">
    <property type="entry name" value="Riboflavin_synthase-like_b-brl"/>
</dbReference>
<dbReference type="PANTHER" id="PTHR19370">
    <property type="entry name" value="NADH-CYTOCHROME B5 REDUCTASE"/>
    <property type="match status" value="1"/>
</dbReference>
<dbReference type="PANTHER" id="PTHR19370:SF184">
    <property type="entry name" value="NADH-CYTOCHROME B5 REDUCTASE-LIKE"/>
    <property type="match status" value="1"/>
</dbReference>
<dbReference type="Pfam" id="PF00970">
    <property type="entry name" value="FAD_binding_6"/>
    <property type="match status" value="1"/>
</dbReference>
<dbReference type="Pfam" id="PF00175">
    <property type="entry name" value="NAD_binding_1"/>
    <property type="match status" value="1"/>
</dbReference>
<dbReference type="PRINTS" id="PR00406">
    <property type="entry name" value="CYTB5RDTASE"/>
</dbReference>
<dbReference type="PRINTS" id="PR00371">
    <property type="entry name" value="FPNCR"/>
</dbReference>
<dbReference type="SUPFAM" id="SSF52343">
    <property type="entry name" value="Ferredoxin reductase-like, C-terminal NADP-linked domain"/>
    <property type="match status" value="1"/>
</dbReference>
<dbReference type="SUPFAM" id="SSF63380">
    <property type="entry name" value="Riboflavin synthase domain-like"/>
    <property type="match status" value="1"/>
</dbReference>
<dbReference type="PROSITE" id="PS51384">
    <property type="entry name" value="FAD_FR"/>
    <property type="match status" value="1"/>
</dbReference>
<gene>
    <name type="primary">CBR1</name>
    <name type="ordered locus">KLLA0F27621g</name>
</gene>
<name>NCB5R_KLULA</name>
<proteinExistence type="inferred from homology"/>
<reference key="1">
    <citation type="journal article" date="2004" name="Nature">
        <title>Genome evolution in yeasts.</title>
        <authorList>
            <person name="Dujon B."/>
            <person name="Sherman D."/>
            <person name="Fischer G."/>
            <person name="Durrens P."/>
            <person name="Casaregola S."/>
            <person name="Lafontaine I."/>
            <person name="de Montigny J."/>
            <person name="Marck C."/>
            <person name="Neuveglise C."/>
            <person name="Talla E."/>
            <person name="Goffard N."/>
            <person name="Frangeul L."/>
            <person name="Aigle M."/>
            <person name="Anthouard V."/>
            <person name="Babour A."/>
            <person name="Barbe V."/>
            <person name="Barnay S."/>
            <person name="Blanchin S."/>
            <person name="Beckerich J.-M."/>
            <person name="Beyne E."/>
            <person name="Bleykasten C."/>
            <person name="Boisrame A."/>
            <person name="Boyer J."/>
            <person name="Cattolico L."/>
            <person name="Confanioleri F."/>
            <person name="de Daruvar A."/>
            <person name="Despons L."/>
            <person name="Fabre E."/>
            <person name="Fairhead C."/>
            <person name="Ferry-Dumazet H."/>
            <person name="Groppi A."/>
            <person name="Hantraye F."/>
            <person name="Hennequin C."/>
            <person name="Jauniaux N."/>
            <person name="Joyet P."/>
            <person name="Kachouri R."/>
            <person name="Kerrest A."/>
            <person name="Koszul R."/>
            <person name="Lemaire M."/>
            <person name="Lesur I."/>
            <person name="Ma L."/>
            <person name="Muller H."/>
            <person name="Nicaud J.-M."/>
            <person name="Nikolski M."/>
            <person name="Oztas S."/>
            <person name="Ozier-Kalogeropoulos O."/>
            <person name="Pellenz S."/>
            <person name="Potier S."/>
            <person name="Richard G.-F."/>
            <person name="Straub M.-L."/>
            <person name="Suleau A."/>
            <person name="Swennen D."/>
            <person name="Tekaia F."/>
            <person name="Wesolowski-Louvel M."/>
            <person name="Westhof E."/>
            <person name="Wirth B."/>
            <person name="Zeniou-Meyer M."/>
            <person name="Zivanovic Y."/>
            <person name="Bolotin-Fukuhara M."/>
            <person name="Thierry A."/>
            <person name="Bouchier C."/>
            <person name="Caudron B."/>
            <person name="Scarpelli C."/>
            <person name="Gaillardin C."/>
            <person name="Weissenbach J."/>
            <person name="Wincker P."/>
            <person name="Souciet J.-L."/>
        </authorList>
    </citation>
    <scope>NUCLEOTIDE SEQUENCE [LARGE SCALE GENOMIC DNA]</scope>
    <source>
        <strain>ATCC 8585 / CBS 2359 / DSM 70799 / NBRC 1267 / NRRL Y-1140 / WM37</strain>
    </source>
</reference>
<protein>
    <recommendedName>
        <fullName>NADH-cytochrome b5 reductase 1</fullName>
        <ecNumber evidence="2">1.6.2.2</ecNumber>
    </recommendedName>
    <alternativeName>
        <fullName>Microsomal cytochrome b reductase</fullName>
    </alternativeName>
</protein>